<reference key="1">
    <citation type="journal article" date="2006" name="Proc. Natl. Acad. Sci. U.S.A.">
        <title>Comparative genomics of the lactic acid bacteria.</title>
        <authorList>
            <person name="Makarova K.S."/>
            <person name="Slesarev A."/>
            <person name="Wolf Y.I."/>
            <person name="Sorokin A."/>
            <person name="Mirkin B."/>
            <person name="Koonin E.V."/>
            <person name="Pavlov A."/>
            <person name="Pavlova N."/>
            <person name="Karamychev V."/>
            <person name="Polouchine N."/>
            <person name="Shakhova V."/>
            <person name="Grigoriev I."/>
            <person name="Lou Y."/>
            <person name="Rohksar D."/>
            <person name="Lucas S."/>
            <person name="Huang K."/>
            <person name="Goodstein D.M."/>
            <person name="Hawkins T."/>
            <person name="Plengvidhya V."/>
            <person name="Welker D."/>
            <person name="Hughes J."/>
            <person name="Goh Y."/>
            <person name="Benson A."/>
            <person name="Baldwin K."/>
            <person name="Lee J.-H."/>
            <person name="Diaz-Muniz I."/>
            <person name="Dosti B."/>
            <person name="Smeianov V."/>
            <person name="Wechter W."/>
            <person name="Barabote R."/>
            <person name="Lorca G."/>
            <person name="Altermann E."/>
            <person name="Barrangou R."/>
            <person name="Ganesan B."/>
            <person name="Xie Y."/>
            <person name="Rawsthorne H."/>
            <person name="Tamir D."/>
            <person name="Parker C."/>
            <person name="Breidt F."/>
            <person name="Broadbent J.R."/>
            <person name="Hutkins R."/>
            <person name="O'Sullivan D."/>
            <person name="Steele J."/>
            <person name="Unlu G."/>
            <person name="Saier M.H. Jr."/>
            <person name="Klaenhammer T."/>
            <person name="Richardson P."/>
            <person name="Kozyavkin S."/>
            <person name="Weimer B.C."/>
            <person name="Mills D.A."/>
        </authorList>
    </citation>
    <scope>NUCLEOTIDE SEQUENCE [LARGE SCALE GENOMIC DNA]</scope>
    <source>
        <strain>ATCC 33323 / DSM 20243 / BCRC 14619 / CIP 102991 / JCM 1131 / KCTC 3163 / NCIMB 11718 / NCTC 13722 / AM63</strain>
    </source>
</reference>
<protein>
    <recommendedName>
        <fullName evidence="1">Large ribosomal subunit protein bL12</fullName>
    </recommendedName>
    <alternativeName>
        <fullName evidence="2">50S ribosomal protein L7/L12</fullName>
    </alternativeName>
</protein>
<dbReference type="EMBL" id="CP000413">
    <property type="protein sequence ID" value="ABJ59767.1"/>
    <property type="molecule type" value="Genomic_DNA"/>
</dbReference>
<dbReference type="RefSeq" id="WP_003647769.1">
    <property type="nucleotide sequence ID" value="NZ_WBMG01000001.1"/>
</dbReference>
<dbReference type="SMR" id="Q045V5"/>
<dbReference type="GeneID" id="83569837"/>
<dbReference type="KEGG" id="lga:LGAS_0362"/>
<dbReference type="HOGENOM" id="CLU_086499_3_2_9"/>
<dbReference type="BioCyc" id="LGAS324831:G1G6Y-360-MONOMER"/>
<dbReference type="Proteomes" id="UP000000664">
    <property type="component" value="Chromosome"/>
</dbReference>
<dbReference type="GO" id="GO:0022625">
    <property type="term" value="C:cytosolic large ribosomal subunit"/>
    <property type="evidence" value="ECO:0007669"/>
    <property type="project" value="TreeGrafter"/>
</dbReference>
<dbReference type="GO" id="GO:0003729">
    <property type="term" value="F:mRNA binding"/>
    <property type="evidence" value="ECO:0007669"/>
    <property type="project" value="TreeGrafter"/>
</dbReference>
<dbReference type="GO" id="GO:0003735">
    <property type="term" value="F:structural constituent of ribosome"/>
    <property type="evidence" value="ECO:0007669"/>
    <property type="project" value="InterPro"/>
</dbReference>
<dbReference type="GO" id="GO:0006412">
    <property type="term" value="P:translation"/>
    <property type="evidence" value="ECO:0007669"/>
    <property type="project" value="UniProtKB-UniRule"/>
</dbReference>
<dbReference type="CDD" id="cd00387">
    <property type="entry name" value="Ribosomal_L7_L12"/>
    <property type="match status" value="1"/>
</dbReference>
<dbReference type="FunFam" id="3.30.1390.10:FF:000001">
    <property type="entry name" value="50S ribosomal protein L7/L12"/>
    <property type="match status" value="1"/>
</dbReference>
<dbReference type="Gene3D" id="3.30.1390.10">
    <property type="match status" value="1"/>
</dbReference>
<dbReference type="Gene3D" id="1.20.5.710">
    <property type="entry name" value="Single helix bin"/>
    <property type="match status" value="1"/>
</dbReference>
<dbReference type="HAMAP" id="MF_00368">
    <property type="entry name" value="Ribosomal_bL12"/>
    <property type="match status" value="1"/>
</dbReference>
<dbReference type="InterPro" id="IPR000206">
    <property type="entry name" value="Ribosomal_bL12"/>
</dbReference>
<dbReference type="InterPro" id="IPR013823">
    <property type="entry name" value="Ribosomal_bL12_C"/>
</dbReference>
<dbReference type="InterPro" id="IPR014719">
    <property type="entry name" value="Ribosomal_bL12_C/ClpS-like"/>
</dbReference>
<dbReference type="InterPro" id="IPR008932">
    <property type="entry name" value="Ribosomal_bL12_oligo"/>
</dbReference>
<dbReference type="InterPro" id="IPR036235">
    <property type="entry name" value="Ribosomal_bL12_oligo_N_sf"/>
</dbReference>
<dbReference type="NCBIfam" id="TIGR00855">
    <property type="entry name" value="L12"/>
    <property type="match status" value="1"/>
</dbReference>
<dbReference type="PANTHER" id="PTHR45987">
    <property type="entry name" value="39S RIBOSOMAL PROTEIN L12"/>
    <property type="match status" value="1"/>
</dbReference>
<dbReference type="PANTHER" id="PTHR45987:SF4">
    <property type="entry name" value="LARGE RIBOSOMAL SUBUNIT PROTEIN BL12M"/>
    <property type="match status" value="1"/>
</dbReference>
<dbReference type="Pfam" id="PF00542">
    <property type="entry name" value="Ribosomal_L12"/>
    <property type="match status" value="1"/>
</dbReference>
<dbReference type="Pfam" id="PF16320">
    <property type="entry name" value="Ribosomal_L12_N"/>
    <property type="match status" value="1"/>
</dbReference>
<dbReference type="SUPFAM" id="SSF54736">
    <property type="entry name" value="ClpS-like"/>
    <property type="match status" value="1"/>
</dbReference>
<dbReference type="SUPFAM" id="SSF48300">
    <property type="entry name" value="Ribosomal protein L7/12, oligomerisation (N-terminal) domain"/>
    <property type="match status" value="1"/>
</dbReference>
<keyword id="KW-0687">Ribonucleoprotein</keyword>
<keyword id="KW-0689">Ribosomal protein</keyword>
<accession>Q045V5</accession>
<gene>
    <name evidence="1" type="primary">rplL</name>
    <name type="ordered locus">LGAS_0362</name>
</gene>
<organism>
    <name type="scientific">Lactobacillus gasseri (strain ATCC 33323 / DSM 20243 / BCRC 14619 / CIP 102991 / JCM 1131 / KCTC 3163 / NCIMB 11718 / NCTC 13722 / AM63)</name>
    <dbReference type="NCBI Taxonomy" id="324831"/>
    <lineage>
        <taxon>Bacteria</taxon>
        <taxon>Bacillati</taxon>
        <taxon>Bacillota</taxon>
        <taxon>Bacilli</taxon>
        <taxon>Lactobacillales</taxon>
        <taxon>Lactobacillaceae</taxon>
        <taxon>Lactobacillus</taxon>
    </lineage>
</organism>
<proteinExistence type="inferred from homology"/>
<sequence>MALDTEKIIEDLKGASILELNDLVKAIEDEFGVSAAAPVAAAGAAGAGAEKTEFDVELTDVGQEKVKVIKVVRDITGLGLKDSKDLVDGAPKNVKEGVSEDEANDIKAKLEEVGATVTVK</sequence>
<evidence type="ECO:0000255" key="1">
    <source>
        <dbReference type="HAMAP-Rule" id="MF_00368"/>
    </source>
</evidence>
<evidence type="ECO:0000305" key="2"/>
<comment type="function">
    <text evidence="1">Forms part of the ribosomal stalk which helps the ribosome interact with GTP-bound translation factors. Is thus essential for accurate translation.</text>
</comment>
<comment type="subunit">
    <text evidence="1">Homodimer. Part of the ribosomal stalk of the 50S ribosomal subunit. Forms a multimeric L10(L12)X complex, where L10 forms an elongated spine to which 2 to 4 L12 dimers bind in a sequential fashion. Binds GTP-bound translation factors.</text>
</comment>
<comment type="similarity">
    <text evidence="1">Belongs to the bacterial ribosomal protein bL12 family.</text>
</comment>
<name>RL7_LACGA</name>
<feature type="chain" id="PRO_1000007029" description="Large ribosomal subunit protein bL12">
    <location>
        <begin position="1"/>
        <end position="120"/>
    </location>
</feature>